<feature type="chain" id="PRO_1000088896" description="Ribosome-binding factor A">
    <location>
        <begin position="1"/>
        <end position="133"/>
    </location>
</feature>
<accession>B5XSX5</accession>
<organism>
    <name type="scientific">Klebsiella pneumoniae (strain 342)</name>
    <dbReference type="NCBI Taxonomy" id="507522"/>
    <lineage>
        <taxon>Bacteria</taxon>
        <taxon>Pseudomonadati</taxon>
        <taxon>Pseudomonadota</taxon>
        <taxon>Gammaproteobacteria</taxon>
        <taxon>Enterobacterales</taxon>
        <taxon>Enterobacteriaceae</taxon>
        <taxon>Klebsiella/Raoultella group</taxon>
        <taxon>Klebsiella</taxon>
        <taxon>Klebsiella pneumoniae complex</taxon>
    </lineage>
</organism>
<name>RBFA_KLEP3</name>
<evidence type="ECO:0000255" key="1">
    <source>
        <dbReference type="HAMAP-Rule" id="MF_00003"/>
    </source>
</evidence>
<proteinExistence type="inferred from homology"/>
<protein>
    <recommendedName>
        <fullName evidence="1">Ribosome-binding factor A</fullName>
    </recommendedName>
</protein>
<dbReference type="EMBL" id="CP000964">
    <property type="protein sequence ID" value="ACI06779.1"/>
    <property type="molecule type" value="Genomic_DNA"/>
</dbReference>
<dbReference type="SMR" id="B5XSX5"/>
<dbReference type="KEGG" id="kpe:KPK_0547"/>
<dbReference type="HOGENOM" id="CLU_089475_5_0_6"/>
<dbReference type="Proteomes" id="UP000001734">
    <property type="component" value="Chromosome"/>
</dbReference>
<dbReference type="GO" id="GO:0005829">
    <property type="term" value="C:cytosol"/>
    <property type="evidence" value="ECO:0007669"/>
    <property type="project" value="TreeGrafter"/>
</dbReference>
<dbReference type="GO" id="GO:0043024">
    <property type="term" value="F:ribosomal small subunit binding"/>
    <property type="evidence" value="ECO:0007669"/>
    <property type="project" value="TreeGrafter"/>
</dbReference>
<dbReference type="GO" id="GO:0030490">
    <property type="term" value="P:maturation of SSU-rRNA"/>
    <property type="evidence" value="ECO:0007669"/>
    <property type="project" value="UniProtKB-UniRule"/>
</dbReference>
<dbReference type="FunFam" id="3.30.300.20:FF:000007">
    <property type="entry name" value="Ribosome-binding factor A"/>
    <property type="match status" value="1"/>
</dbReference>
<dbReference type="Gene3D" id="3.30.300.20">
    <property type="match status" value="1"/>
</dbReference>
<dbReference type="HAMAP" id="MF_00003">
    <property type="entry name" value="RbfA"/>
    <property type="match status" value="1"/>
</dbReference>
<dbReference type="InterPro" id="IPR015946">
    <property type="entry name" value="KH_dom-like_a/b"/>
</dbReference>
<dbReference type="InterPro" id="IPR000238">
    <property type="entry name" value="RbfA"/>
</dbReference>
<dbReference type="InterPro" id="IPR023799">
    <property type="entry name" value="RbfA_dom_sf"/>
</dbReference>
<dbReference type="InterPro" id="IPR020053">
    <property type="entry name" value="Ribosome-bd_factorA_CS"/>
</dbReference>
<dbReference type="NCBIfam" id="TIGR00082">
    <property type="entry name" value="rbfA"/>
    <property type="match status" value="1"/>
</dbReference>
<dbReference type="PANTHER" id="PTHR33515">
    <property type="entry name" value="RIBOSOME-BINDING FACTOR A, CHLOROPLASTIC-RELATED"/>
    <property type="match status" value="1"/>
</dbReference>
<dbReference type="PANTHER" id="PTHR33515:SF1">
    <property type="entry name" value="RIBOSOME-BINDING FACTOR A, CHLOROPLASTIC-RELATED"/>
    <property type="match status" value="1"/>
</dbReference>
<dbReference type="Pfam" id="PF02033">
    <property type="entry name" value="RBFA"/>
    <property type="match status" value="1"/>
</dbReference>
<dbReference type="SUPFAM" id="SSF89919">
    <property type="entry name" value="Ribosome-binding factor A, RbfA"/>
    <property type="match status" value="1"/>
</dbReference>
<dbReference type="PROSITE" id="PS01319">
    <property type="entry name" value="RBFA"/>
    <property type="match status" value="1"/>
</dbReference>
<reference key="1">
    <citation type="journal article" date="2008" name="PLoS Genet.">
        <title>Complete genome sequence of the N2-fixing broad host range endophyte Klebsiella pneumoniae 342 and virulence predictions verified in mice.</title>
        <authorList>
            <person name="Fouts D.E."/>
            <person name="Tyler H.L."/>
            <person name="DeBoy R.T."/>
            <person name="Daugherty S."/>
            <person name="Ren Q."/>
            <person name="Badger J.H."/>
            <person name="Durkin A.S."/>
            <person name="Huot H."/>
            <person name="Shrivastava S."/>
            <person name="Kothari S."/>
            <person name="Dodson R.J."/>
            <person name="Mohamoud Y."/>
            <person name="Khouri H."/>
            <person name="Roesch L.F.W."/>
            <person name="Krogfelt K.A."/>
            <person name="Struve C."/>
            <person name="Triplett E.W."/>
            <person name="Methe B.A."/>
        </authorList>
    </citation>
    <scope>NUCLEOTIDE SEQUENCE [LARGE SCALE GENOMIC DNA]</scope>
    <source>
        <strain>342</strain>
    </source>
</reference>
<keyword id="KW-0963">Cytoplasm</keyword>
<keyword id="KW-0690">Ribosome biogenesis</keyword>
<sequence>MAKEFGRPQRVAQEMQKEIAIILQREIKDPRLGMMTTVSGVEMSRDLAYAKVYVTFLNDKDEAAVKAGIKALQEASGFIRSLLGKAMRLRIVPELTFFYDNSLVEGMRMSNLVTSVVKHDDERRVNPDDSKED</sequence>
<comment type="function">
    <text evidence="1">One of several proteins that assist in the late maturation steps of the functional core of the 30S ribosomal subunit. Associates with free 30S ribosomal subunits (but not with 30S subunits that are part of 70S ribosomes or polysomes). Required for efficient processing of 16S rRNA. May interact with the 5'-terminal helix region of 16S rRNA.</text>
</comment>
<comment type="subunit">
    <text evidence="1">Monomer. Binds 30S ribosomal subunits, but not 50S ribosomal subunits or 70S ribosomes.</text>
</comment>
<comment type="subcellular location">
    <subcellularLocation>
        <location evidence="1">Cytoplasm</location>
    </subcellularLocation>
</comment>
<comment type="similarity">
    <text evidence="1">Belongs to the RbfA family.</text>
</comment>
<gene>
    <name evidence="1" type="primary">rbfA</name>
    <name type="ordered locus">KPK_0547</name>
</gene>